<protein>
    <recommendedName>
        <fullName>Conserved oligomeric Golgi complex subunit 6</fullName>
        <shortName>COG complex subunit 6</shortName>
    </recommendedName>
    <alternativeName>
        <fullName>Complexed with DOR1 protein 2</fullName>
    </alternativeName>
    <alternativeName>
        <fullName>Component of oligomeric Golgi complex 6</fullName>
    </alternativeName>
    <alternativeName>
        <fullName>Protein SEC37</fullName>
    </alternativeName>
</protein>
<dbReference type="EMBL" id="AAFW02000067">
    <property type="protein sequence ID" value="EDN62769.1"/>
    <property type="molecule type" value="Genomic_DNA"/>
</dbReference>
<dbReference type="SMR" id="A6ZS37"/>
<dbReference type="HOGENOM" id="CLU_017837_0_0_1"/>
<dbReference type="OrthoDB" id="33698at4893"/>
<dbReference type="Proteomes" id="UP000007060">
    <property type="component" value="Unassembled WGS sequence"/>
</dbReference>
<dbReference type="GO" id="GO:0000139">
    <property type="term" value="C:Golgi membrane"/>
    <property type="evidence" value="ECO:0007669"/>
    <property type="project" value="UniProtKB-SubCell"/>
</dbReference>
<dbReference type="GO" id="GO:0017119">
    <property type="term" value="C:Golgi transport complex"/>
    <property type="evidence" value="ECO:0007669"/>
    <property type="project" value="InterPro"/>
</dbReference>
<dbReference type="GO" id="GO:0006891">
    <property type="term" value="P:intra-Golgi vesicle-mediated transport"/>
    <property type="evidence" value="ECO:0007669"/>
    <property type="project" value="InterPro"/>
</dbReference>
<dbReference type="GO" id="GO:0015031">
    <property type="term" value="P:protein transport"/>
    <property type="evidence" value="ECO:0007669"/>
    <property type="project" value="UniProtKB-KW"/>
</dbReference>
<dbReference type="InterPro" id="IPR010490">
    <property type="entry name" value="COG6"/>
</dbReference>
<dbReference type="InterPro" id="IPR048369">
    <property type="entry name" value="COG6_C"/>
</dbReference>
<dbReference type="InterPro" id="IPR048368">
    <property type="entry name" value="COG6_N"/>
</dbReference>
<dbReference type="PANTHER" id="PTHR21506">
    <property type="entry name" value="COMPONENT OF OLIGOMERIC GOLGI COMPLEX 6"/>
    <property type="match status" value="1"/>
</dbReference>
<dbReference type="PANTHER" id="PTHR21506:SF0">
    <property type="entry name" value="CONSERVED OLIGOMERIC GOLGI COMPLEX SUBUNIT 6"/>
    <property type="match status" value="1"/>
</dbReference>
<dbReference type="Pfam" id="PF20653">
    <property type="entry name" value="COG6_C"/>
    <property type="match status" value="1"/>
</dbReference>
<dbReference type="Pfam" id="PF06419">
    <property type="entry name" value="COG6_N"/>
    <property type="match status" value="1"/>
</dbReference>
<dbReference type="SMART" id="SM01087">
    <property type="entry name" value="COG6"/>
    <property type="match status" value="1"/>
</dbReference>
<sequence>MDFVVDYQTYAMADTAAPELPEPEPRLNLTSDAQSQPTGILDLQFKLPDLQRYSNNNATLPVDNDGAGSKDLHKKMTHYAMSSIDKIQLSNPSKQLGQNSQDEKLSQQESQNFTNYEPKNLDLSKLVSPSSGSNKNTTNLVLSNKLSKILNNYTLINYQATVQLRKSLKVLEENKERLSLDEQKLMNPEYVGTLARRALRTDLESQLLKEHITVLEEFKPIIRRIKRLSSSVEKIQRTSEKLLSNETNEVPTNNVVLQEIDQYRLKAEQLKLKKKILLSIRDRFTLNQVEDDVITNGTIDNIFFEVVKKVINIKDESSFLLTLPNLNAGNALIMGVNEILEKTNKKIFNYLIDFLYSFESSSNLLNDHGTTEQESLNIFRKSLVFLSSDLELFNELLKRVTTLRSKSILDEFLSQFDMNSTTSKPIILSAHDPIRYIGDVLASVHSIIANEADFVKSLFDFQDEDLKDTPISILQQNKTFLKGIDNKLLNDIIQSLSNSCRIRIEQIVRFEENPIINFEIVRLLKLYRVMFERKGIQDDSSIINNLKSLEDISKNRIIGYYEDYMKQTVMAETKNSSDDLLPPEWLSEYMNKLVELFEIYEKTHAAEDEESEDNKLLSSKNLQTIVEQPIKDVLLKQLQTSFPLAKKNEKEKASLLTIEINCFDLIKSRLQPFEGLFAQDDDSRKITIWVCDKLKEYTKQMLTLQIKFLFENTGLDLYSNLVNMIFPVDSVKDELDYDMYLALRDNSLMELDMVRKNVHDKLNYYLPQALTDVQGNLLFKLTSPMIADEICDECFKKLSLFYNIFRKLLIHLYPNKKDQVFEILNFSTDEFDMLIGIDH</sequence>
<feature type="chain" id="PRO_0000339333" description="Conserved oligomeric Golgi complex subunit 6">
    <location>
        <begin position="1"/>
        <end position="839"/>
    </location>
</feature>
<keyword id="KW-0333">Golgi apparatus</keyword>
<keyword id="KW-0472">Membrane</keyword>
<keyword id="KW-0653">Protein transport</keyword>
<keyword id="KW-0813">Transport</keyword>
<organism>
    <name type="scientific">Saccharomyces cerevisiae (strain YJM789)</name>
    <name type="common">Baker's yeast</name>
    <dbReference type="NCBI Taxonomy" id="307796"/>
    <lineage>
        <taxon>Eukaryota</taxon>
        <taxon>Fungi</taxon>
        <taxon>Dikarya</taxon>
        <taxon>Ascomycota</taxon>
        <taxon>Saccharomycotina</taxon>
        <taxon>Saccharomycetes</taxon>
        <taxon>Saccharomycetales</taxon>
        <taxon>Saccharomycetaceae</taxon>
        <taxon>Saccharomyces</taxon>
    </lineage>
</organism>
<proteinExistence type="inferred from homology"/>
<evidence type="ECO:0000250" key="1"/>
<evidence type="ECO:0000305" key="2"/>
<comment type="function">
    <text evidence="1">Acts as a component of the peripheral membrane COG complex that is involved in intra-Golgi protein trafficking. COG is located at the cis-Golgi, and regulates tethering of retrograde intra-Golgi vesicles and possibly a number of other membrane trafficking events (By similarity).</text>
</comment>
<comment type="subcellular location">
    <subcellularLocation>
        <location evidence="1">Golgi apparatus membrane</location>
        <topology evidence="1">Peripheral membrane protein</topology>
    </subcellularLocation>
</comment>
<comment type="similarity">
    <text evidence="2">Belongs to the COG6 family.</text>
</comment>
<accession>A6ZS37</accession>
<reference key="1">
    <citation type="journal article" date="2007" name="Proc. Natl. Acad. Sci. U.S.A.">
        <title>Genome sequencing and comparative analysis of Saccharomyces cerevisiae strain YJM789.</title>
        <authorList>
            <person name="Wei W."/>
            <person name="McCusker J.H."/>
            <person name="Hyman R.W."/>
            <person name="Jones T."/>
            <person name="Ning Y."/>
            <person name="Cao Z."/>
            <person name="Gu Z."/>
            <person name="Bruno D."/>
            <person name="Miranda M."/>
            <person name="Nguyen M."/>
            <person name="Wilhelmy J."/>
            <person name="Komp C."/>
            <person name="Tamse R."/>
            <person name="Wang X."/>
            <person name="Jia P."/>
            <person name="Luedi P."/>
            <person name="Oefner P.J."/>
            <person name="David L."/>
            <person name="Dietrich F.S."/>
            <person name="Li Y."/>
            <person name="Davis R.W."/>
            <person name="Steinmetz L.M."/>
        </authorList>
    </citation>
    <scope>NUCLEOTIDE SEQUENCE [LARGE SCALE GENOMIC DNA]</scope>
    <source>
        <strain>YJM789</strain>
    </source>
</reference>
<gene>
    <name type="primary">COG6</name>
    <name type="synonym">COD2</name>
    <name type="synonym">SEC37</name>
    <name type="synonym">TFI2</name>
    <name type="ORF">SCY_4748</name>
</gene>
<name>COG6_YEAS7</name>